<keyword id="KW-0472">Membrane</keyword>
<keyword id="KW-0521">NADP</keyword>
<keyword id="KW-0560">Oxidoreductase</keyword>
<keyword id="KW-1185">Reference proteome</keyword>
<keyword id="KW-0812">Transmembrane</keyword>
<keyword id="KW-1133">Transmembrane helix</keyword>
<sequence length="816" mass="93989">MESKVVALNRESRRWKKSSFNELLKRARNQKSTICNRFTRKNTPNILVTFTSRLTLLRPTFFNFACWHSAMEIFESMSFSVKFDKELLPIGRHGLTAGWLIESLGQLLNSDNIRNIKCSQLGTDGFVSQIMRVVIEFTNNQTKKYIVKMPETTNIKAALEKTTQQKMPEGADEQFIGGLTMFFNREVEYYAMEKIPGLRTPKCYHAQQWDNGKTTGAIVMQDLEGMVSVPYYESLNLQQIASIGSQMLNLHLFSIGMSDEWRQKFPFPMELIDTVSNMTDIVKLYVSRNPELEEGFSKVEKMYQDRELFTKVLRDSHKSLGIDDFLCHGDLWFYNLMWIPRKSGSEVASNHLGSIIDWQNVHTGNICEDFCHMLTFCCDTEIRRQAENTFLPYYYNQLKAKAVEAGKKLNLTLNQFLRAYRRNFIAHALHLPFIVSIMLCVKPADDEIVQKIRNQMSGALWSAAQFAVTSYVCVRVLKFLYIMCKSVLVHFITPKHDLDYLKDTWTVITGGTDGIGKAYIEELCKTRGLKKFYLIGRNIDKLNNTKKELVEQHGCEVMCHVHDFEKDDLSALPKDLETLDVGILINCAGIAPHIIGTLTELPEGLASKILRVNLMSAVKMTEMILPNMVKKKRGIIVNISSMTGWRRFRTSVLTRLAKLHYPSSPTPCQMNTEELEFVFSVSFQCSLLPRSPRMKLKKRTISSLSPLKTLPNKLSELSGLIGKSQRAVCNMMFRLPLEHCSPFGFSKYFSSLLLCSEFISIVLPLIKRRTRERIIRVFIISRLSIFVHFYHDFFLLNAIFQIKKFSCELNFLESFF</sequence>
<protein>
    <recommendedName>
        <fullName>Uncharacterized oxidoreductase dhs-27</fullName>
        <ecNumber>1.-.-.-</ecNumber>
    </recommendedName>
    <alternativeName>
        <fullName>Short-chain dehydrogenase 27</fullName>
    </alternativeName>
</protein>
<evidence type="ECO:0000250" key="1"/>
<evidence type="ECO:0000255" key="2"/>
<evidence type="ECO:0000305" key="3"/>
<feature type="chain" id="PRO_0000054879" description="Uncharacterized oxidoreductase dhs-27">
    <location>
        <begin position="1"/>
        <end position="816"/>
    </location>
</feature>
<feature type="transmembrane region" description="Helical" evidence="2">
    <location>
        <begin position="743"/>
        <end position="763"/>
    </location>
</feature>
<feature type="transmembrane region" description="Helical" evidence="2">
    <location>
        <begin position="777"/>
        <end position="797"/>
    </location>
</feature>
<feature type="active site" description="Proton acceptor" evidence="1">
    <location>
        <position position="661"/>
    </location>
</feature>
<feature type="binding site" evidence="1">
    <location>
        <begin position="503"/>
        <end position="534"/>
    </location>
    <ligand>
        <name>NADP(+)</name>
        <dbReference type="ChEBI" id="CHEBI:58349"/>
    </ligand>
</feature>
<feature type="binding site" evidence="1">
    <location>
        <position position="641"/>
    </location>
    <ligand>
        <name>substrate</name>
    </ligand>
</feature>
<name>DHS27_CAEEL</name>
<accession>Q11177</accession>
<accession>D7SFL0</accession>
<comment type="subcellular location">
    <subcellularLocation>
        <location evidence="3">Membrane</location>
        <topology evidence="3">Multi-pass membrane protein</topology>
    </subcellularLocation>
</comment>
<comment type="similarity">
    <text evidence="3">Belongs to the short-chain dehydrogenases/reductases (SDR) family.</text>
</comment>
<comment type="sequence caution" evidence="3">
    <conflict type="erroneous gene model prediction">
        <sequence resource="EMBL-CDS" id="CCD63032"/>
    </conflict>
</comment>
<proteinExistence type="inferred from homology"/>
<reference key="1">
    <citation type="journal article" date="1998" name="Science">
        <title>Genome sequence of the nematode C. elegans: a platform for investigating biology.</title>
        <authorList>
            <consortium name="The C. elegans sequencing consortium"/>
        </authorList>
    </citation>
    <scope>NUCLEOTIDE SEQUENCE [LARGE SCALE GENOMIC DNA]</scope>
    <source>
        <strain>Bristol N2</strain>
    </source>
</reference>
<dbReference type="EC" id="1.-.-.-"/>
<dbReference type="EMBL" id="FO080344">
    <property type="protein sequence ID" value="CCD63032.1"/>
    <property type="status" value="ALT_SEQ"/>
    <property type="molecule type" value="Genomic_DNA"/>
</dbReference>
<dbReference type="PIR" id="T15411">
    <property type="entry name" value="T15411"/>
</dbReference>
<dbReference type="RefSeq" id="NP_508591.3">
    <property type="nucleotide sequence ID" value="NM_076190.3"/>
</dbReference>
<dbReference type="PaxDb" id="6239-C04F6.5"/>
<dbReference type="PeptideAtlas" id="Q11177"/>
<dbReference type="EnsemblMetazoa" id="C04F6.5.1">
    <property type="protein sequence ID" value="C04F6.5.1"/>
    <property type="gene ID" value="WBGene00000990"/>
</dbReference>
<dbReference type="GeneID" id="180632"/>
<dbReference type="KEGG" id="cel:CELE_C04F6.5"/>
<dbReference type="UCSC" id="C04F6.5">
    <property type="organism name" value="c. elegans"/>
</dbReference>
<dbReference type="AGR" id="WB:WBGene00000990"/>
<dbReference type="CTD" id="180632"/>
<dbReference type="WormBase" id="C04F6.5">
    <property type="protein sequence ID" value="CE45036"/>
    <property type="gene ID" value="WBGene00000990"/>
    <property type="gene designation" value="dhs-27"/>
</dbReference>
<dbReference type="eggNOG" id="KOG1014">
    <property type="taxonomic scope" value="Eukaryota"/>
</dbReference>
<dbReference type="GeneTree" id="ENSGT00940000160053"/>
<dbReference type="InParanoid" id="Q11177"/>
<dbReference type="OrthoDB" id="5545019at2759"/>
<dbReference type="PRO" id="PR:Q11177"/>
<dbReference type="Proteomes" id="UP000001940">
    <property type="component" value="Chromosome X"/>
</dbReference>
<dbReference type="Bgee" id="WBGene00000990">
    <property type="expression patterns" value="Expressed in embryo and 3 other cell types or tissues"/>
</dbReference>
<dbReference type="GO" id="GO:0016020">
    <property type="term" value="C:membrane"/>
    <property type="evidence" value="ECO:0007669"/>
    <property type="project" value="UniProtKB-SubCell"/>
</dbReference>
<dbReference type="GO" id="GO:0016491">
    <property type="term" value="F:oxidoreductase activity"/>
    <property type="evidence" value="ECO:0007669"/>
    <property type="project" value="UniProtKB-KW"/>
</dbReference>
<dbReference type="CDD" id="cd05356">
    <property type="entry name" value="17beta-HSD1_like_SDR_c"/>
    <property type="match status" value="1"/>
</dbReference>
<dbReference type="Gene3D" id="3.90.1200.10">
    <property type="match status" value="1"/>
</dbReference>
<dbReference type="Gene3D" id="3.40.50.720">
    <property type="entry name" value="NAD(P)-binding Rossmann-like Domain"/>
    <property type="match status" value="1"/>
</dbReference>
<dbReference type="InterPro" id="IPR015897">
    <property type="entry name" value="CHK_kinase-like"/>
</dbReference>
<dbReference type="InterPro" id="IPR012877">
    <property type="entry name" value="Dhs-27"/>
</dbReference>
<dbReference type="InterPro" id="IPR011009">
    <property type="entry name" value="Kinase-like_dom_sf"/>
</dbReference>
<dbReference type="InterPro" id="IPR036291">
    <property type="entry name" value="NAD(P)-bd_dom_sf"/>
</dbReference>
<dbReference type="InterPro" id="IPR052961">
    <property type="entry name" value="Oxido-Kinase-like_Enzymes"/>
</dbReference>
<dbReference type="InterPro" id="IPR002347">
    <property type="entry name" value="SDR_fam"/>
</dbReference>
<dbReference type="PANTHER" id="PTHR23020:SF22">
    <property type="entry name" value="CHK KINASE-LIKE DOMAIN-CONTAINING PROTEIN"/>
    <property type="match status" value="1"/>
</dbReference>
<dbReference type="PANTHER" id="PTHR23020">
    <property type="entry name" value="UNCHARACTERIZED NUCLEAR HORMONE RECEPTOR-RELATED"/>
    <property type="match status" value="1"/>
</dbReference>
<dbReference type="Pfam" id="PF00106">
    <property type="entry name" value="adh_short"/>
    <property type="match status" value="1"/>
</dbReference>
<dbReference type="Pfam" id="PF07914">
    <property type="entry name" value="DUF1679"/>
    <property type="match status" value="1"/>
</dbReference>
<dbReference type="PRINTS" id="PR00081">
    <property type="entry name" value="GDHRDH"/>
</dbReference>
<dbReference type="SMART" id="SM00587">
    <property type="entry name" value="CHK"/>
    <property type="match status" value="1"/>
</dbReference>
<dbReference type="SUPFAM" id="SSF51735">
    <property type="entry name" value="NAD(P)-binding Rossmann-fold domains"/>
    <property type="match status" value="1"/>
</dbReference>
<dbReference type="SUPFAM" id="SSF56112">
    <property type="entry name" value="Protein kinase-like (PK-like)"/>
    <property type="match status" value="1"/>
</dbReference>
<gene>
    <name type="primary">dhs-27</name>
    <name type="ORF">C04F6.5</name>
</gene>
<organism>
    <name type="scientific">Caenorhabditis elegans</name>
    <dbReference type="NCBI Taxonomy" id="6239"/>
    <lineage>
        <taxon>Eukaryota</taxon>
        <taxon>Metazoa</taxon>
        <taxon>Ecdysozoa</taxon>
        <taxon>Nematoda</taxon>
        <taxon>Chromadorea</taxon>
        <taxon>Rhabditida</taxon>
        <taxon>Rhabditina</taxon>
        <taxon>Rhabditomorpha</taxon>
        <taxon>Rhabditoidea</taxon>
        <taxon>Rhabditidae</taxon>
        <taxon>Peloderinae</taxon>
        <taxon>Caenorhabditis</taxon>
    </lineage>
</organism>